<evidence type="ECO:0000250" key="1"/>
<evidence type="ECO:0000255" key="2"/>
<evidence type="ECO:0000255" key="3">
    <source>
        <dbReference type="PROSITE-ProRule" id="PRU10089"/>
    </source>
</evidence>
<evidence type="ECO:0000255" key="4">
    <source>
        <dbReference type="PROSITE-ProRule" id="PRU10090"/>
    </source>
</evidence>
<evidence type="ECO:0000269" key="5">
    <source>
    </source>
</evidence>
<accession>Q1EIQ3</accession>
<sequence>MKFVLAIASLLVLSVVYAYPSEIRTFEEFKKAFNKHYVTPEAEQEARQNFLASLEHIEKAGKGRINQFSDMSLEEFKNQYLMSDQAYEALKKEFDLDAGAQACQIGAVNIPNEIDLRALGYVTKIKNQVACGSCWAFSGVATVESNYLSYDNVSLDLSEQELVDCASQHGCGGDTVLNGLRYIQKNGVVEEQSYPYKAREGRCQRPNAKRYGIKDLCQIYPPNGDKIRTYLATKQAALSVIIGIRDLDSFRHYDGRTILQSDNGGKRNFHAINIVGYGSKQGVRYWIIRNSWDTTWGDKGYGYFVADKNLMGIEKFPLAAML</sequence>
<feature type="signal peptide" evidence="2">
    <location>
        <begin position="1"/>
        <end position="18"/>
    </location>
</feature>
<feature type="propeptide" id="PRO_0000307766" evidence="1">
    <location>
        <begin position="19"/>
        <end position="99"/>
    </location>
</feature>
<feature type="chain" id="PRO_0000307767" description="Peptidase 1">
    <location>
        <begin position="100"/>
        <end position="322"/>
    </location>
</feature>
<feature type="active site" evidence="1">
    <location>
        <position position="134"/>
    </location>
</feature>
<feature type="active site" evidence="1">
    <location>
        <position position="270"/>
    </location>
</feature>
<feature type="active site" evidence="1">
    <location>
        <position position="290"/>
    </location>
</feature>
<feature type="glycosylation site" description="N-linked (GlcNAc...) asparagine" evidence="2">
    <location>
        <position position="152"/>
    </location>
</feature>
<feature type="disulfide bond" evidence="1">
    <location>
        <begin position="131"/>
        <end position="171"/>
    </location>
</feature>
<proteinExistence type="evidence at protein level"/>
<name>PEPT1_PSOOV</name>
<reference key="1">
    <citation type="journal article" date="2007" name="Parasitology">
        <title>Eukaryotic expression of recombinant Pso o 1, an allergen from Psoroptes ovis, and its localization in the mite.</title>
        <authorList>
            <person name="Nisbet A.J."/>
            <person name="MacKellar A."/>
            <person name="McLean K."/>
            <person name="Brennan G.P."/>
            <person name="Huntley J.F."/>
        </authorList>
    </citation>
    <scope>NUCLEOTIDE SEQUENCE [MRNA]</scope>
    <scope>TISSUE SPECIFICITY</scope>
    <source>
        <strain>Moredun</strain>
    </source>
</reference>
<keyword id="KW-0020">Allergen</keyword>
<keyword id="KW-1015">Disulfide bond</keyword>
<keyword id="KW-0325">Glycoprotein</keyword>
<keyword id="KW-0378">Hydrolase</keyword>
<keyword id="KW-0645">Protease</keyword>
<keyword id="KW-0964">Secreted</keyword>
<keyword id="KW-0732">Signal</keyword>
<keyword id="KW-0788">Thiol protease</keyword>
<keyword id="KW-0865">Zymogen</keyword>
<protein>
    <recommendedName>
        <fullName>Peptidase 1</fullName>
        <ecNumber>3.4.22.65</ecNumber>
    </recommendedName>
    <alternativeName>
        <fullName>Mite group 1 allergen Pso o 1</fullName>
    </alternativeName>
    <allergenName>Pso o 1</allergenName>
</protein>
<comment type="function">
    <text>Probable thiol protease.</text>
</comment>
<comment type="catalytic activity">
    <reaction>
        <text>Broad endopeptidase specificity.</text>
        <dbReference type="EC" id="3.4.22.65"/>
    </reaction>
</comment>
<comment type="subcellular location">
    <subcellularLocation>
        <location>Secreted</location>
    </subcellularLocation>
</comment>
<comment type="tissue specificity">
    <text evidence="5">Expressed in the gut.</text>
</comment>
<comment type="allergen">
    <text>Causes an allergic reaction in human. Common symptoms of mite allergy are bronchial asthma, allergic rhinitis and conjunctivitis.</text>
</comment>
<comment type="similarity">
    <text evidence="3 4">Belongs to the peptidase C1 family.</text>
</comment>
<organism>
    <name type="scientific">Psoroptes ovis</name>
    <name type="common">Sheep scab mite</name>
    <dbReference type="NCBI Taxonomy" id="83912"/>
    <lineage>
        <taxon>Eukaryota</taxon>
        <taxon>Metazoa</taxon>
        <taxon>Ecdysozoa</taxon>
        <taxon>Arthropoda</taxon>
        <taxon>Chelicerata</taxon>
        <taxon>Arachnida</taxon>
        <taxon>Acari</taxon>
        <taxon>Acariformes</taxon>
        <taxon>Sarcoptiformes</taxon>
        <taxon>Astigmata</taxon>
        <taxon>Psoroptidia</taxon>
        <taxon>Sarcoptoidea</taxon>
        <taxon>Psoroptidae</taxon>
        <taxon>Psoroptes</taxon>
    </lineage>
</organism>
<dbReference type="EC" id="3.4.22.65"/>
<dbReference type="EMBL" id="AM269885">
    <property type="protein sequence ID" value="CAK32515.1"/>
    <property type="molecule type" value="mRNA"/>
</dbReference>
<dbReference type="SMR" id="Q1EIQ3"/>
<dbReference type="Allergome" id="739">
    <property type="allergen name" value="Pso o 1"/>
</dbReference>
<dbReference type="GO" id="GO:0005576">
    <property type="term" value="C:extracellular region"/>
    <property type="evidence" value="ECO:0007669"/>
    <property type="project" value="UniProtKB-SubCell"/>
</dbReference>
<dbReference type="GO" id="GO:0008234">
    <property type="term" value="F:cysteine-type peptidase activity"/>
    <property type="evidence" value="ECO:0007669"/>
    <property type="project" value="UniProtKB-KW"/>
</dbReference>
<dbReference type="GO" id="GO:0006508">
    <property type="term" value="P:proteolysis"/>
    <property type="evidence" value="ECO:0007669"/>
    <property type="project" value="UniProtKB-KW"/>
</dbReference>
<dbReference type="CDD" id="cd02248">
    <property type="entry name" value="Peptidase_C1A"/>
    <property type="match status" value="1"/>
</dbReference>
<dbReference type="Gene3D" id="3.90.70.10">
    <property type="entry name" value="Cysteine proteinases"/>
    <property type="match status" value="1"/>
</dbReference>
<dbReference type="InterPro" id="IPR038765">
    <property type="entry name" value="Papain-like_cys_pep_sf"/>
</dbReference>
<dbReference type="InterPro" id="IPR025661">
    <property type="entry name" value="Pept_asp_AS"/>
</dbReference>
<dbReference type="InterPro" id="IPR025660">
    <property type="entry name" value="Pept_his_AS"/>
</dbReference>
<dbReference type="InterPro" id="IPR013128">
    <property type="entry name" value="Peptidase_C1A"/>
</dbReference>
<dbReference type="InterPro" id="IPR000668">
    <property type="entry name" value="Peptidase_C1A_C"/>
</dbReference>
<dbReference type="InterPro" id="IPR039417">
    <property type="entry name" value="Peptidase_C1A_papain-like"/>
</dbReference>
<dbReference type="InterPro" id="IPR013201">
    <property type="entry name" value="Prot_inhib_I29"/>
</dbReference>
<dbReference type="PANTHER" id="PTHR12411">
    <property type="entry name" value="CYSTEINE PROTEASE FAMILY C1-RELATED"/>
    <property type="match status" value="1"/>
</dbReference>
<dbReference type="Pfam" id="PF08246">
    <property type="entry name" value="Inhibitor_I29"/>
    <property type="match status" value="1"/>
</dbReference>
<dbReference type="Pfam" id="PF00112">
    <property type="entry name" value="Peptidase_C1"/>
    <property type="match status" value="1"/>
</dbReference>
<dbReference type="PRINTS" id="PR00705">
    <property type="entry name" value="PAPAIN"/>
</dbReference>
<dbReference type="SMART" id="SM00848">
    <property type="entry name" value="Inhibitor_I29"/>
    <property type="match status" value="1"/>
</dbReference>
<dbReference type="SMART" id="SM00645">
    <property type="entry name" value="Pept_C1"/>
    <property type="match status" value="1"/>
</dbReference>
<dbReference type="SUPFAM" id="SSF54001">
    <property type="entry name" value="Cysteine proteinases"/>
    <property type="match status" value="1"/>
</dbReference>
<dbReference type="PROSITE" id="PS00640">
    <property type="entry name" value="THIOL_PROTEASE_ASN"/>
    <property type="match status" value="1"/>
</dbReference>
<dbReference type="PROSITE" id="PS00639">
    <property type="entry name" value="THIOL_PROTEASE_HIS"/>
    <property type="match status" value="1"/>
</dbReference>